<feature type="chain" id="PRO_0000345925" description="tRNA modification GTPase MnmE">
    <location>
        <begin position="1"/>
        <end position="441"/>
    </location>
</feature>
<feature type="domain" description="TrmE-type G">
    <location>
        <begin position="211"/>
        <end position="363"/>
    </location>
</feature>
<feature type="binding site" evidence="1">
    <location>
        <position position="21"/>
    </location>
    <ligand>
        <name>(6S)-5-formyl-5,6,7,8-tetrahydrofolate</name>
        <dbReference type="ChEBI" id="CHEBI:57457"/>
    </ligand>
</feature>
<feature type="binding site" evidence="1">
    <location>
        <position position="78"/>
    </location>
    <ligand>
        <name>(6S)-5-formyl-5,6,7,8-tetrahydrofolate</name>
        <dbReference type="ChEBI" id="CHEBI:57457"/>
    </ligand>
</feature>
<feature type="binding site" evidence="1">
    <location>
        <position position="117"/>
    </location>
    <ligand>
        <name>(6S)-5-formyl-5,6,7,8-tetrahydrofolate</name>
        <dbReference type="ChEBI" id="CHEBI:57457"/>
    </ligand>
</feature>
<feature type="binding site" evidence="1">
    <location>
        <begin position="221"/>
        <end position="226"/>
    </location>
    <ligand>
        <name>GTP</name>
        <dbReference type="ChEBI" id="CHEBI:37565"/>
    </ligand>
</feature>
<feature type="binding site" evidence="1">
    <location>
        <position position="221"/>
    </location>
    <ligand>
        <name>K(+)</name>
        <dbReference type="ChEBI" id="CHEBI:29103"/>
    </ligand>
</feature>
<feature type="binding site" evidence="1">
    <location>
        <position position="225"/>
    </location>
    <ligand>
        <name>Mg(2+)</name>
        <dbReference type="ChEBI" id="CHEBI:18420"/>
    </ligand>
</feature>
<feature type="binding site" evidence="1">
    <location>
        <begin position="240"/>
        <end position="246"/>
    </location>
    <ligand>
        <name>GTP</name>
        <dbReference type="ChEBI" id="CHEBI:37565"/>
    </ligand>
</feature>
<feature type="binding site" evidence="1">
    <location>
        <position position="240"/>
    </location>
    <ligand>
        <name>K(+)</name>
        <dbReference type="ChEBI" id="CHEBI:29103"/>
    </ligand>
</feature>
<feature type="binding site" evidence="1">
    <location>
        <position position="242"/>
    </location>
    <ligand>
        <name>K(+)</name>
        <dbReference type="ChEBI" id="CHEBI:29103"/>
    </ligand>
</feature>
<feature type="binding site" evidence="1">
    <location>
        <position position="245"/>
    </location>
    <ligand>
        <name>K(+)</name>
        <dbReference type="ChEBI" id="CHEBI:29103"/>
    </ligand>
</feature>
<feature type="binding site" evidence="1">
    <location>
        <position position="246"/>
    </location>
    <ligand>
        <name>Mg(2+)</name>
        <dbReference type="ChEBI" id="CHEBI:18420"/>
    </ligand>
</feature>
<feature type="binding site" evidence="1">
    <location>
        <begin position="265"/>
        <end position="268"/>
    </location>
    <ligand>
        <name>GTP</name>
        <dbReference type="ChEBI" id="CHEBI:37565"/>
    </ligand>
</feature>
<feature type="binding site" evidence="1">
    <location>
        <position position="441"/>
    </location>
    <ligand>
        <name>(6S)-5-formyl-5,6,7,8-tetrahydrofolate</name>
        <dbReference type="ChEBI" id="CHEBI:57457"/>
    </ligand>
</feature>
<accession>A6LMN4</accession>
<comment type="function">
    <text evidence="1">Exhibits a very high intrinsic GTPase hydrolysis rate. Involved in the addition of a carboxymethylaminomethyl (cmnm) group at the wobble position (U34) of certain tRNAs, forming tRNA-cmnm(5)s(2)U34.</text>
</comment>
<comment type="cofactor">
    <cofactor evidence="1">
        <name>K(+)</name>
        <dbReference type="ChEBI" id="CHEBI:29103"/>
    </cofactor>
    <text evidence="1">Binds 1 potassium ion per subunit.</text>
</comment>
<comment type="subunit">
    <text evidence="1">Homodimer. Heterotetramer of two MnmE and two MnmG subunits.</text>
</comment>
<comment type="subcellular location">
    <subcellularLocation>
        <location evidence="1">Cytoplasm</location>
    </subcellularLocation>
</comment>
<comment type="similarity">
    <text evidence="1">Belongs to the TRAFAC class TrmE-Era-EngA-EngB-Septin-like GTPase superfamily. TrmE GTPase family.</text>
</comment>
<gene>
    <name evidence="1" type="primary">mnmE</name>
    <name evidence="1" type="synonym">trmE</name>
    <name type="ordered locus">Tmel_1336</name>
</gene>
<protein>
    <recommendedName>
        <fullName evidence="1">tRNA modification GTPase MnmE</fullName>
        <ecNumber evidence="1">3.6.-.-</ecNumber>
    </recommendedName>
</protein>
<name>MNME_THEM4</name>
<dbReference type="EC" id="3.6.-.-" evidence="1"/>
<dbReference type="EMBL" id="CP000716">
    <property type="protein sequence ID" value="ABR31185.1"/>
    <property type="molecule type" value="Genomic_DNA"/>
</dbReference>
<dbReference type="RefSeq" id="WP_012057544.1">
    <property type="nucleotide sequence ID" value="NC_009616.1"/>
</dbReference>
<dbReference type="SMR" id="A6LMN4"/>
<dbReference type="STRING" id="391009.Tmel_1336"/>
<dbReference type="KEGG" id="tme:Tmel_1336"/>
<dbReference type="eggNOG" id="COG0486">
    <property type="taxonomic scope" value="Bacteria"/>
</dbReference>
<dbReference type="HOGENOM" id="CLU_019624_4_1_0"/>
<dbReference type="OrthoDB" id="9805918at2"/>
<dbReference type="Proteomes" id="UP000001110">
    <property type="component" value="Chromosome"/>
</dbReference>
<dbReference type="GO" id="GO:0005829">
    <property type="term" value="C:cytosol"/>
    <property type="evidence" value="ECO:0007669"/>
    <property type="project" value="TreeGrafter"/>
</dbReference>
<dbReference type="GO" id="GO:0005525">
    <property type="term" value="F:GTP binding"/>
    <property type="evidence" value="ECO:0007669"/>
    <property type="project" value="UniProtKB-UniRule"/>
</dbReference>
<dbReference type="GO" id="GO:0003924">
    <property type="term" value="F:GTPase activity"/>
    <property type="evidence" value="ECO:0007669"/>
    <property type="project" value="UniProtKB-UniRule"/>
</dbReference>
<dbReference type="GO" id="GO:0046872">
    <property type="term" value="F:metal ion binding"/>
    <property type="evidence" value="ECO:0007669"/>
    <property type="project" value="UniProtKB-KW"/>
</dbReference>
<dbReference type="GO" id="GO:0030488">
    <property type="term" value="P:tRNA methylation"/>
    <property type="evidence" value="ECO:0007669"/>
    <property type="project" value="TreeGrafter"/>
</dbReference>
<dbReference type="GO" id="GO:0002098">
    <property type="term" value="P:tRNA wobble uridine modification"/>
    <property type="evidence" value="ECO:0007669"/>
    <property type="project" value="TreeGrafter"/>
</dbReference>
<dbReference type="CDD" id="cd04164">
    <property type="entry name" value="trmE"/>
    <property type="match status" value="1"/>
</dbReference>
<dbReference type="CDD" id="cd14858">
    <property type="entry name" value="TrmE_N"/>
    <property type="match status" value="1"/>
</dbReference>
<dbReference type="FunFam" id="3.40.50.300:FF:001376">
    <property type="entry name" value="tRNA modification GTPase MnmE"/>
    <property type="match status" value="1"/>
</dbReference>
<dbReference type="Gene3D" id="3.40.50.300">
    <property type="entry name" value="P-loop containing nucleotide triphosphate hydrolases"/>
    <property type="match status" value="1"/>
</dbReference>
<dbReference type="Gene3D" id="3.30.1360.120">
    <property type="entry name" value="Probable tRNA modification gtpase trme, domain 1"/>
    <property type="match status" value="1"/>
</dbReference>
<dbReference type="Gene3D" id="1.20.120.430">
    <property type="entry name" value="tRNA modification GTPase MnmE domain 2"/>
    <property type="match status" value="1"/>
</dbReference>
<dbReference type="HAMAP" id="MF_00379">
    <property type="entry name" value="GTPase_MnmE"/>
    <property type="match status" value="1"/>
</dbReference>
<dbReference type="InterPro" id="IPR031168">
    <property type="entry name" value="G_TrmE"/>
</dbReference>
<dbReference type="InterPro" id="IPR006073">
    <property type="entry name" value="GTP-bd"/>
</dbReference>
<dbReference type="InterPro" id="IPR018948">
    <property type="entry name" value="GTP-bd_TrmE_N"/>
</dbReference>
<dbReference type="InterPro" id="IPR004520">
    <property type="entry name" value="GTPase_MnmE"/>
</dbReference>
<dbReference type="InterPro" id="IPR027368">
    <property type="entry name" value="MnmE_dom2"/>
</dbReference>
<dbReference type="InterPro" id="IPR025867">
    <property type="entry name" value="MnmE_helical"/>
</dbReference>
<dbReference type="InterPro" id="IPR027417">
    <property type="entry name" value="P-loop_NTPase"/>
</dbReference>
<dbReference type="InterPro" id="IPR005225">
    <property type="entry name" value="Small_GTP-bd"/>
</dbReference>
<dbReference type="InterPro" id="IPR027266">
    <property type="entry name" value="TrmE/GcvT_dom1"/>
</dbReference>
<dbReference type="NCBIfam" id="TIGR00450">
    <property type="entry name" value="mnmE_trmE_thdF"/>
    <property type="match status" value="1"/>
</dbReference>
<dbReference type="NCBIfam" id="NF003661">
    <property type="entry name" value="PRK05291.1-3"/>
    <property type="match status" value="1"/>
</dbReference>
<dbReference type="NCBIfam" id="TIGR00231">
    <property type="entry name" value="small_GTP"/>
    <property type="match status" value="1"/>
</dbReference>
<dbReference type="PANTHER" id="PTHR42714">
    <property type="entry name" value="TRNA MODIFICATION GTPASE GTPBP3"/>
    <property type="match status" value="1"/>
</dbReference>
<dbReference type="PANTHER" id="PTHR42714:SF2">
    <property type="entry name" value="TRNA MODIFICATION GTPASE GTPBP3, MITOCHONDRIAL"/>
    <property type="match status" value="1"/>
</dbReference>
<dbReference type="Pfam" id="PF01926">
    <property type="entry name" value="MMR_HSR1"/>
    <property type="match status" value="1"/>
</dbReference>
<dbReference type="Pfam" id="PF12631">
    <property type="entry name" value="MnmE_helical"/>
    <property type="match status" value="1"/>
</dbReference>
<dbReference type="Pfam" id="PF10396">
    <property type="entry name" value="TrmE_N"/>
    <property type="match status" value="1"/>
</dbReference>
<dbReference type="PRINTS" id="PR00326">
    <property type="entry name" value="GTP1OBG"/>
</dbReference>
<dbReference type="SUPFAM" id="SSF52540">
    <property type="entry name" value="P-loop containing nucleoside triphosphate hydrolases"/>
    <property type="match status" value="1"/>
</dbReference>
<dbReference type="PROSITE" id="PS51709">
    <property type="entry name" value="G_TRME"/>
    <property type="match status" value="1"/>
</dbReference>
<reference key="1">
    <citation type="submission" date="2007-05" db="EMBL/GenBank/DDBJ databases">
        <title>Complete sequence of Thermosipho melanesiensis BI429.</title>
        <authorList>
            <consortium name="US DOE Joint Genome Institute"/>
            <person name="Copeland A."/>
            <person name="Lucas S."/>
            <person name="Lapidus A."/>
            <person name="Barry K."/>
            <person name="Glavina del Rio T."/>
            <person name="Dalin E."/>
            <person name="Tice H."/>
            <person name="Pitluck S."/>
            <person name="Chertkov O."/>
            <person name="Brettin T."/>
            <person name="Bruce D."/>
            <person name="Detter J.C."/>
            <person name="Han C."/>
            <person name="Schmutz J."/>
            <person name="Larimer F."/>
            <person name="Land M."/>
            <person name="Hauser L."/>
            <person name="Kyrpides N."/>
            <person name="Mikhailova N."/>
            <person name="Nelson K."/>
            <person name="Gogarten J.P."/>
            <person name="Noll K."/>
            <person name="Richardson P."/>
        </authorList>
    </citation>
    <scope>NUCLEOTIDE SEQUENCE [LARGE SCALE GENOMIC DNA]</scope>
    <source>
        <strain>DSM 12029 / CIP 104789 / BI429</strain>
    </source>
</reference>
<proteinExistence type="inferred from homology"/>
<keyword id="KW-0963">Cytoplasm</keyword>
<keyword id="KW-0342">GTP-binding</keyword>
<keyword id="KW-0378">Hydrolase</keyword>
<keyword id="KW-0460">Magnesium</keyword>
<keyword id="KW-0479">Metal-binding</keyword>
<keyword id="KW-0547">Nucleotide-binding</keyword>
<keyword id="KW-0630">Potassium</keyword>
<keyword id="KW-0819">tRNA processing</keyword>
<organism>
    <name type="scientific">Thermosipho melanesiensis (strain DSM 12029 / CIP 104789 / BI429)</name>
    <dbReference type="NCBI Taxonomy" id="391009"/>
    <lineage>
        <taxon>Bacteria</taxon>
        <taxon>Thermotogati</taxon>
        <taxon>Thermotogota</taxon>
        <taxon>Thermotogae</taxon>
        <taxon>Thermotogales</taxon>
        <taxon>Fervidobacteriaceae</taxon>
        <taxon>Thermosipho</taxon>
    </lineage>
</organism>
<evidence type="ECO:0000255" key="1">
    <source>
        <dbReference type="HAMAP-Rule" id="MF_00379"/>
    </source>
</evidence>
<sequence>MFDTIAAVSSPHGTGAIAVIRIDGPKSHDIAKKLTGLNKVEYRRVYTTYLNFEGDILDQVNIVFFKSPNSYTGNDLIEIYTHGGILVTQNVLDAILKSGARIAKRGEFTKRGFLNGKISLVQAEAIYQIIEAKSEVSLKMSLQNLKGKLGEEIEYYRGEILNVLSEIEVTFDYPDDIELDEKSILNLLSKLKDEVGRKIEDSKKSIMLNNGIVMTIVGKPNSGKSTLLNRLLLEDRAIVTDIPGTTRDVIKGEIEINGIRFVIVDTAGIRETKDVVEKIGIERSLKEIQKADVILFVLDATTGFTKEDKLILRKIEGGNYIPVWNKCDEGNNFNKIFDGEIKISALNGEGLKNLENKIVSKVKNIIESGTASHVITQRQVEILERVYTHLESAVNNLNMGYEIDLISIDLRRALEELDMLIGRKFSDDLLDNIFSNFCVGK</sequence>